<evidence type="ECO:0000250" key="1"/>
<evidence type="ECO:0000255" key="2">
    <source>
        <dbReference type="PROSITE-ProRule" id="PRU00145"/>
    </source>
</evidence>
<evidence type="ECO:0000255" key="3">
    <source>
        <dbReference type="PROSITE-ProRule" id="PRU00288"/>
    </source>
</evidence>
<evidence type="ECO:0000269" key="4">
    <source>
    </source>
</evidence>
<evidence type="ECO:0000305" key="5"/>
<keyword id="KW-1003">Cell membrane</keyword>
<keyword id="KW-0963">Cytoplasm</keyword>
<keyword id="KW-0343">GTPase activation</keyword>
<keyword id="KW-0472">Membrane</keyword>
<keyword id="KW-0479">Metal-binding</keyword>
<keyword id="KW-1185">Reference proteome</keyword>
<keyword id="KW-0677">Repeat</keyword>
<keyword id="KW-0862">Zinc</keyword>
<keyword id="KW-0863">Zinc-finger</keyword>
<accession>Q9JK15</accession>
<gene>
    <name type="primary">Adap2</name>
    <name type="synonym">Centa2</name>
</gene>
<name>ADAP2_RAT</name>
<sequence length="376" mass="43524">MGDRERNKKRLLELLQAAGTGNGHCADCGAADPDWASYKLGVFICLHCSGVHRNFPDISKVKSVRLDFWDDSMVEFMTHNGNLSVKAKFEARVPTFYYVPQASDCLVLKEQWIRAKYERQEFMAEKAVSPPGDREGFLWKRGRDNSQFLRRRFVLLSREGLLKYYTKEEGKTPKAIINIKDLNATFQTEKIGHPHGLQITYRKEGQTRNLFVYHDSGKEIVDWFNALRAARLQYLKLAFPDLPESELVPLITRNYLKQGFMEKTGPKHREPFKKRWFALDPQERRLLYYKNPLDAFEQGQVFLGSNEQGYEVWEGLPQGIRGNRWKVGLTVITPERKFVFTCPTEKEQREWLESLRGVLSSPLSPLHLLTTSAKSG</sequence>
<feature type="chain" id="PRO_0000074208" description="Arf-GAP with dual PH domain-containing protein 2">
    <location>
        <begin position="1"/>
        <end position="376"/>
    </location>
</feature>
<feature type="domain" description="Arf-GAP" evidence="3">
    <location>
        <begin position="9"/>
        <end position="130"/>
    </location>
</feature>
<feature type="domain" description="PH 1" evidence="2">
    <location>
        <begin position="131"/>
        <end position="232"/>
    </location>
</feature>
<feature type="domain" description="PH 2" evidence="2">
    <location>
        <begin position="254"/>
        <end position="360"/>
    </location>
</feature>
<feature type="zinc finger region" description="C4-type" evidence="3">
    <location>
        <begin position="25"/>
        <end position="48"/>
    </location>
</feature>
<feature type="mutagenesis site" description="Almost complete loss of InsP4 binding." evidence="4">
    <original>R</original>
    <variation>C</variation>
    <location>
        <position position="151"/>
    </location>
</feature>
<feature type="mutagenesis site" description="No loss of InsP4 binding. Almost complete loss of InsP4 binding; when associated with C-151." evidence="4">
    <original>R</original>
    <variation>C</variation>
    <location>
        <position position="275"/>
    </location>
</feature>
<organism>
    <name type="scientific">Rattus norvegicus</name>
    <name type="common">Rat</name>
    <dbReference type="NCBI Taxonomy" id="10116"/>
    <lineage>
        <taxon>Eukaryota</taxon>
        <taxon>Metazoa</taxon>
        <taxon>Chordata</taxon>
        <taxon>Craniata</taxon>
        <taxon>Vertebrata</taxon>
        <taxon>Euteleostomi</taxon>
        <taxon>Mammalia</taxon>
        <taxon>Eutheria</taxon>
        <taxon>Euarchontoglires</taxon>
        <taxon>Glires</taxon>
        <taxon>Rodentia</taxon>
        <taxon>Myomorpha</taxon>
        <taxon>Muroidea</taxon>
        <taxon>Muridae</taxon>
        <taxon>Murinae</taxon>
        <taxon>Rattus</taxon>
    </lineage>
</organism>
<dbReference type="EMBL" id="AJ238993">
    <property type="protein sequence ID" value="CAB88403.1"/>
    <property type="molecule type" value="mRNA"/>
</dbReference>
<dbReference type="RefSeq" id="NP_064486.1">
    <property type="nucleotide sequence ID" value="NM_020101.2"/>
</dbReference>
<dbReference type="SMR" id="Q9JK15"/>
<dbReference type="FunCoup" id="Q9JK15">
    <property type="interactions" value="840"/>
</dbReference>
<dbReference type="STRING" id="10116.ENSRNOP00000053112"/>
<dbReference type="PhosphoSitePlus" id="Q9JK15"/>
<dbReference type="PaxDb" id="10116-ENSRNOP00000053112"/>
<dbReference type="GeneID" id="56826"/>
<dbReference type="KEGG" id="rno:56826"/>
<dbReference type="AGR" id="RGD:708487"/>
<dbReference type="CTD" id="55803"/>
<dbReference type="RGD" id="708487">
    <property type="gene designation" value="Adap2"/>
</dbReference>
<dbReference type="eggNOG" id="KOG0703">
    <property type="taxonomic scope" value="Eukaryota"/>
</dbReference>
<dbReference type="InParanoid" id="Q9JK15"/>
<dbReference type="OrthoDB" id="10266696at2759"/>
<dbReference type="PhylomeDB" id="Q9JK15"/>
<dbReference type="PRO" id="PR:Q9JK15"/>
<dbReference type="Proteomes" id="UP000002494">
    <property type="component" value="Unplaced"/>
</dbReference>
<dbReference type="GO" id="GO:0005737">
    <property type="term" value="C:cytoplasm"/>
    <property type="evidence" value="ECO:0000250"/>
    <property type="project" value="UniProtKB"/>
</dbReference>
<dbReference type="GO" id="GO:0043231">
    <property type="term" value="C:intracellular membrane-bounded organelle"/>
    <property type="evidence" value="ECO:0000318"/>
    <property type="project" value="GO_Central"/>
</dbReference>
<dbReference type="GO" id="GO:0005740">
    <property type="term" value="C:mitochondrial envelope"/>
    <property type="evidence" value="ECO:0000314"/>
    <property type="project" value="UniProtKB"/>
</dbReference>
<dbReference type="GO" id="GO:0005886">
    <property type="term" value="C:plasma membrane"/>
    <property type="evidence" value="ECO:0000250"/>
    <property type="project" value="UniProtKB"/>
</dbReference>
<dbReference type="GO" id="GO:0005545">
    <property type="term" value="F:1-phosphatidylinositol binding"/>
    <property type="evidence" value="ECO:0000314"/>
    <property type="project" value="RGD"/>
</dbReference>
<dbReference type="GO" id="GO:0005096">
    <property type="term" value="F:GTPase activator activity"/>
    <property type="evidence" value="ECO:0000318"/>
    <property type="project" value="GO_Central"/>
</dbReference>
<dbReference type="GO" id="GO:0043533">
    <property type="term" value="F:inositol 1,3,4,5 tetrakisphosphate binding"/>
    <property type="evidence" value="ECO:0000250"/>
    <property type="project" value="UniProtKB"/>
</dbReference>
<dbReference type="GO" id="GO:0005547">
    <property type="term" value="F:phosphatidylinositol-3,4,5-trisphosphate binding"/>
    <property type="evidence" value="ECO:0000314"/>
    <property type="project" value="UniProtKB"/>
</dbReference>
<dbReference type="GO" id="GO:0043325">
    <property type="term" value="F:phosphatidylinositol-3,4-bisphosphate binding"/>
    <property type="evidence" value="ECO:0000314"/>
    <property type="project" value="UniProtKB"/>
</dbReference>
<dbReference type="GO" id="GO:0005546">
    <property type="term" value="F:phosphatidylinositol-4,5-bisphosphate binding"/>
    <property type="evidence" value="ECO:0000314"/>
    <property type="project" value="UniProtKB"/>
</dbReference>
<dbReference type="GO" id="GO:0008270">
    <property type="term" value="F:zinc ion binding"/>
    <property type="evidence" value="ECO:0007669"/>
    <property type="project" value="UniProtKB-KW"/>
</dbReference>
<dbReference type="GO" id="GO:0007507">
    <property type="term" value="P:heart development"/>
    <property type="evidence" value="ECO:0000250"/>
    <property type="project" value="UniProtKB"/>
</dbReference>
<dbReference type="CDD" id="cd13252">
    <property type="entry name" value="PH1_ADAP"/>
    <property type="match status" value="1"/>
</dbReference>
<dbReference type="CDD" id="cd01251">
    <property type="entry name" value="PH2_ADAP"/>
    <property type="match status" value="1"/>
</dbReference>
<dbReference type="FunFam" id="2.30.29.30:FF:000080">
    <property type="entry name" value="Arf-GAP with dual PH domain-containing protein 1"/>
    <property type="match status" value="1"/>
</dbReference>
<dbReference type="FunFam" id="2.30.29.30:FF:000099">
    <property type="entry name" value="Arf-GAP with dual PH domain-containing protein 1"/>
    <property type="match status" value="1"/>
</dbReference>
<dbReference type="FunFam" id="1.10.220.150:FF:000015">
    <property type="entry name" value="arf-GAP with dual PH domain-containing protein 2 isoform X1"/>
    <property type="match status" value="1"/>
</dbReference>
<dbReference type="Gene3D" id="1.10.220.150">
    <property type="entry name" value="Arf GTPase activating protein"/>
    <property type="match status" value="1"/>
</dbReference>
<dbReference type="Gene3D" id="2.30.29.30">
    <property type="entry name" value="Pleckstrin-homology domain (PH domain)/Phosphotyrosine-binding domain (PTB)"/>
    <property type="match status" value="2"/>
</dbReference>
<dbReference type="InterPro" id="IPR052589">
    <property type="entry name" value="Arf-GAP_dual-PH_domain"/>
</dbReference>
<dbReference type="InterPro" id="IPR037278">
    <property type="entry name" value="ARFGAP/RecO"/>
</dbReference>
<dbReference type="InterPro" id="IPR001164">
    <property type="entry name" value="ArfGAP_dom"/>
</dbReference>
<dbReference type="InterPro" id="IPR038508">
    <property type="entry name" value="ArfGAP_dom_sf"/>
</dbReference>
<dbReference type="InterPro" id="IPR011993">
    <property type="entry name" value="PH-like_dom_sf"/>
</dbReference>
<dbReference type="InterPro" id="IPR037849">
    <property type="entry name" value="PH1_ADAP"/>
</dbReference>
<dbReference type="InterPro" id="IPR037851">
    <property type="entry name" value="PH2_ADAP"/>
</dbReference>
<dbReference type="InterPro" id="IPR001849">
    <property type="entry name" value="PH_domain"/>
</dbReference>
<dbReference type="PANTHER" id="PTHR46021">
    <property type="entry name" value="ARF-GAP WITH DUAL PH DOMAIN-CONTAINING PROTEIN 1-LIKE PROTEIN"/>
    <property type="match status" value="1"/>
</dbReference>
<dbReference type="PANTHER" id="PTHR46021:SF6">
    <property type="entry name" value="ARF-GAP WITH DUAL PH DOMAIN-CONTAINING PROTEIN 2"/>
    <property type="match status" value="1"/>
</dbReference>
<dbReference type="Pfam" id="PF01412">
    <property type="entry name" value="ArfGap"/>
    <property type="match status" value="1"/>
</dbReference>
<dbReference type="Pfam" id="PF00169">
    <property type="entry name" value="PH"/>
    <property type="match status" value="2"/>
</dbReference>
<dbReference type="PRINTS" id="PR00405">
    <property type="entry name" value="REVINTRACTNG"/>
</dbReference>
<dbReference type="SMART" id="SM00105">
    <property type="entry name" value="ArfGap"/>
    <property type="match status" value="1"/>
</dbReference>
<dbReference type="SMART" id="SM00233">
    <property type="entry name" value="PH"/>
    <property type="match status" value="2"/>
</dbReference>
<dbReference type="SUPFAM" id="SSF57863">
    <property type="entry name" value="ArfGap/RecO-like zinc finger"/>
    <property type="match status" value="1"/>
</dbReference>
<dbReference type="SUPFAM" id="SSF50729">
    <property type="entry name" value="PH domain-like"/>
    <property type="match status" value="2"/>
</dbReference>
<dbReference type="PROSITE" id="PS50115">
    <property type="entry name" value="ARFGAP"/>
    <property type="match status" value="1"/>
</dbReference>
<dbReference type="PROSITE" id="PS50003">
    <property type="entry name" value="PH_DOMAIN"/>
    <property type="match status" value="2"/>
</dbReference>
<reference key="1">
    <citation type="journal article" date="2002" name="Eur. J. Cell Biol.">
        <title>Identification of centaurin-alpha2: a phosphatidylinositide-binding protein present in fat, heart and skeletal muscle.</title>
        <authorList>
            <person name="Whitley P."/>
            <person name="Gibbard A.M."/>
            <person name="Koumanov F."/>
            <person name="Oldfield S."/>
            <person name="Kilgour E.E."/>
            <person name="Prestwich G.D."/>
            <person name="Holman G.D."/>
        </authorList>
    </citation>
    <scope>NUCLEOTIDE SEQUENCE [MRNA]</scope>
    <scope>INTERACTION WITH PTDINS(4,5)P2; PTDINS(3,4,5)P3 AND INS(1,3,4,5)P4</scope>
    <scope>TISSUE SPECIFICITY</scope>
    <scope>MUTAGENESIS OF ARG-151 AND ARG-275</scope>
    <source>
        <tissue>Adipocyte</tissue>
    </source>
</reference>
<proteinExistence type="evidence at protein level"/>
<protein>
    <recommendedName>
        <fullName>Arf-GAP with dual PH domain-containing protein 2</fullName>
    </recommendedName>
    <alternativeName>
        <fullName>Centaurin-alpha-2</fullName>
        <shortName>Cnt-a2</shortName>
    </alternativeName>
</protein>
<comment type="function">
    <text evidence="1 5">GTPase-activating protein for the ADP ribosylation factor family (Potential). Binds phosphatidylinositol 4,5-bisphosphate, phosphatidylinositol 3,4,5-trisphosphate (PtdInsP3) and inositol 1,3,4,5-tetrakisphosphate (InsP4). Binding of phosphatidylinositol 3,5-bisphosphate and phosphatidylinositol 3,4-bisphosphate occurs at a much lower affinity. Possesses a stoichiometry of two binding sites for InsP4 with identical affinity (By similarity).</text>
</comment>
<comment type="subcellular location">
    <subcellularLocation>
        <location evidence="1">Cytoplasm</location>
    </subcellularLocation>
    <subcellularLocation>
        <location evidence="1">Cell membrane</location>
    </subcellularLocation>
    <text evidence="1">Constitutively associated with the plasma membrane. Excluded from the nucleus (By similarity).</text>
</comment>
<comment type="tissue specificity">
    <text evidence="4">Expressed in many tissues, with highest levels in fat, heart and skeletal muscle. Also detected in kidney, liver and lung.</text>
</comment>